<dbReference type="EMBL" id="CP000157">
    <property type="protein sequence ID" value="ABC63722.1"/>
    <property type="molecule type" value="Genomic_DNA"/>
</dbReference>
<dbReference type="RefSeq" id="WP_011414554.1">
    <property type="nucleotide sequence ID" value="NC_007722.1"/>
</dbReference>
<dbReference type="SMR" id="Q2N9B9"/>
<dbReference type="STRING" id="314225.ELI_08150"/>
<dbReference type="KEGG" id="eli:ELI_08150"/>
<dbReference type="eggNOG" id="COG0255">
    <property type="taxonomic scope" value="Bacteria"/>
</dbReference>
<dbReference type="HOGENOM" id="CLU_158491_1_0_5"/>
<dbReference type="OrthoDB" id="9815192at2"/>
<dbReference type="Proteomes" id="UP000008808">
    <property type="component" value="Chromosome"/>
</dbReference>
<dbReference type="GO" id="GO:0022625">
    <property type="term" value="C:cytosolic large ribosomal subunit"/>
    <property type="evidence" value="ECO:0007669"/>
    <property type="project" value="TreeGrafter"/>
</dbReference>
<dbReference type="GO" id="GO:0003735">
    <property type="term" value="F:structural constituent of ribosome"/>
    <property type="evidence" value="ECO:0007669"/>
    <property type="project" value="InterPro"/>
</dbReference>
<dbReference type="GO" id="GO:0006412">
    <property type="term" value="P:translation"/>
    <property type="evidence" value="ECO:0007669"/>
    <property type="project" value="UniProtKB-UniRule"/>
</dbReference>
<dbReference type="CDD" id="cd00427">
    <property type="entry name" value="Ribosomal_L29_HIP"/>
    <property type="match status" value="1"/>
</dbReference>
<dbReference type="FunFam" id="1.10.287.310:FF:000001">
    <property type="entry name" value="50S ribosomal protein L29"/>
    <property type="match status" value="1"/>
</dbReference>
<dbReference type="Gene3D" id="1.10.287.310">
    <property type="match status" value="1"/>
</dbReference>
<dbReference type="HAMAP" id="MF_00374">
    <property type="entry name" value="Ribosomal_uL29"/>
    <property type="match status" value="1"/>
</dbReference>
<dbReference type="InterPro" id="IPR050063">
    <property type="entry name" value="Ribosomal_protein_uL29"/>
</dbReference>
<dbReference type="InterPro" id="IPR001854">
    <property type="entry name" value="Ribosomal_uL29"/>
</dbReference>
<dbReference type="InterPro" id="IPR036049">
    <property type="entry name" value="Ribosomal_uL29_sf"/>
</dbReference>
<dbReference type="NCBIfam" id="TIGR00012">
    <property type="entry name" value="L29"/>
    <property type="match status" value="1"/>
</dbReference>
<dbReference type="PANTHER" id="PTHR10916">
    <property type="entry name" value="60S RIBOSOMAL PROTEIN L35/50S RIBOSOMAL PROTEIN L29"/>
    <property type="match status" value="1"/>
</dbReference>
<dbReference type="PANTHER" id="PTHR10916:SF0">
    <property type="entry name" value="LARGE RIBOSOMAL SUBUNIT PROTEIN UL29C"/>
    <property type="match status" value="1"/>
</dbReference>
<dbReference type="Pfam" id="PF00831">
    <property type="entry name" value="Ribosomal_L29"/>
    <property type="match status" value="1"/>
</dbReference>
<dbReference type="SUPFAM" id="SSF46561">
    <property type="entry name" value="Ribosomal protein L29 (L29p)"/>
    <property type="match status" value="1"/>
</dbReference>
<keyword id="KW-1185">Reference proteome</keyword>
<keyword id="KW-0687">Ribonucleoprotein</keyword>
<keyword id="KW-0689">Ribosomal protein</keyword>
<evidence type="ECO:0000255" key="1">
    <source>
        <dbReference type="HAMAP-Rule" id="MF_00374"/>
    </source>
</evidence>
<evidence type="ECO:0000305" key="2"/>
<name>RL29_ERYLH</name>
<accession>Q2N9B9</accession>
<sequence length="68" mass="7765">MAKVEDLRQKSDDQLAEELVQLKKEQFNLRFQAATNQLEAPARIREVRRSIAQIKTLQNERAASAAKA</sequence>
<comment type="similarity">
    <text evidence="1">Belongs to the universal ribosomal protein uL29 family.</text>
</comment>
<gene>
    <name evidence="1" type="primary">rpmC</name>
    <name type="ordered locus">ELI_08150</name>
</gene>
<proteinExistence type="inferred from homology"/>
<reference key="1">
    <citation type="journal article" date="2009" name="J. Bacteriol.">
        <title>Complete genome sequence of Erythrobacter litoralis HTCC2594.</title>
        <authorList>
            <person name="Oh H.M."/>
            <person name="Giovannoni S.J."/>
            <person name="Ferriera S."/>
            <person name="Johnson J."/>
            <person name="Cho J.C."/>
        </authorList>
    </citation>
    <scope>NUCLEOTIDE SEQUENCE [LARGE SCALE GENOMIC DNA]</scope>
    <source>
        <strain>HTCC2594</strain>
    </source>
</reference>
<organism>
    <name type="scientific">Erythrobacter litoralis (strain HTCC2594)</name>
    <dbReference type="NCBI Taxonomy" id="314225"/>
    <lineage>
        <taxon>Bacteria</taxon>
        <taxon>Pseudomonadati</taxon>
        <taxon>Pseudomonadota</taxon>
        <taxon>Alphaproteobacteria</taxon>
        <taxon>Sphingomonadales</taxon>
        <taxon>Erythrobacteraceae</taxon>
        <taxon>Erythrobacter/Porphyrobacter group</taxon>
        <taxon>Erythrobacter</taxon>
    </lineage>
</organism>
<protein>
    <recommendedName>
        <fullName evidence="1">Large ribosomal subunit protein uL29</fullName>
    </recommendedName>
    <alternativeName>
        <fullName evidence="2">50S ribosomal protein L29</fullName>
    </alternativeName>
</protein>
<feature type="chain" id="PRO_1000007481" description="Large ribosomal subunit protein uL29">
    <location>
        <begin position="1"/>
        <end position="68"/>
    </location>
</feature>